<organism>
    <name type="scientific">Saccharomyces cerevisiae (strain ATCC 204508 / S288c)</name>
    <name type="common">Baker's yeast</name>
    <dbReference type="NCBI Taxonomy" id="559292"/>
    <lineage>
        <taxon>Eukaryota</taxon>
        <taxon>Fungi</taxon>
        <taxon>Dikarya</taxon>
        <taxon>Ascomycota</taxon>
        <taxon>Saccharomycotina</taxon>
        <taxon>Saccharomycetes</taxon>
        <taxon>Saccharomycetales</taxon>
        <taxon>Saccharomycetaceae</taxon>
        <taxon>Saccharomyces</taxon>
    </lineage>
</organism>
<proteinExistence type="predicted"/>
<sequence>MFSCLLHSSRPTDSYCTLAAPLSQTARTRTMTFHAATAKRKTEHSGIKESNLHLSRVLLSSFCRAKGRFVSFFICYPFPFGLTRFPRVLWSIGLDKSLFTRVHFSPSFFSLLAPLQFSGIVRS</sequence>
<accession>P87283</accession>
<accession>A0A1S0T067</accession>
<dbReference type="EMBL" id="U51030">
    <property type="protein sequence ID" value="AAB64464.1"/>
    <property type="molecule type" value="Genomic_DNA"/>
</dbReference>
<dbReference type="EMBL" id="BK006938">
    <property type="protein sequence ID" value="DAA80280.1"/>
    <property type="molecule type" value="Genomic_DNA"/>
</dbReference>
<dbReference type="PIR" id="S70223">
    <property type="entry name" value="S70223"/>
</dbReference>
<dbReference type="RefSeq" id="NP_001335760.1">
    <property type="nucleotide sequence ID" value="NM_001348815.1"/>
</dbReference>
<dbReference type="DIP" id="DIP-2705N"/>
<dbReference type="FunCoup" id="P87283">
    <property type="interactions" value="36"/>
</dbReference>
<dbReference type="IntAct" id="P87283">
    <property type="interactions" value="1"/>
</dbReference>
<dbReference type="MINT" id="P87283"/>
<dbReference type="STRING" id="4932.YDR274C"/>
<dbReference type="PaxDb" id="4932-YDR274C"/>
<dbReference type="EnsemblFungi" id="YDR274C_mRNA">
    <property type="protein sequence ID" value="YDR274C"/>
    <property type="gene ID" value="YDR274C"/>
</dbReference>
<dbReference type="GeneID" id="851867"/>
<dbReference type="AGR" id="SGD:S000002682"/>
<dbReference type="SGD" id="S000002682">
    <property type="gene designation" value="YDR274C"/>
</dbReference>
<dbReference type="HOGENOM" id="CLU_2016997_0_0_1"/>
<dbReference type="InParanoid" id="P87283"/>
<dbReference type="PRO" id="PR:P87283"/>
<dbReference type="Proteomes" id="UP000002311">
    <property type="component" value="Chromosome IV"/>
</dbReference>
<dbReference type="RNAct" id="P87283">
    <property type="molecule type" value="protein"/>
</dbReference>
<gene>
    <name type="ordered locus">YDR274C</name>
    <name type="ORF">D9954.4A</name>
</gene>
<keyword id="KW-1185">Reference proteome</keyword>
<feature type="chain" id="PRO_0000299749" description="Uncharacterized protein YDR274C">
    <location>
        <begin position="1"/>
        <end position="123"/>
    </location>
</feature>
<name>YD274_YEAST</name>
<protein>
    <recommendedName>
        <fullName>Uncharacterized protein YDR274C</fullName>
    </recommendedName>
</protein>
<reference key="1">
    <citation type="journal article" date="1997" name="Nature">
        <title>The nucleotide sequence of Saccharomyces cerevisiae chromosome IV.</title>
        <authorList>
            <person name="Jacq C."/>
            <person name="Alt-Moerbe J."/>
            <person name="Andre B."/>
            <person name="Arnold W."/>
            <person name="Bahr A."/>
            <person name="Ballesta J.P.G."/>
            <person name="Bargues M."/>
            <person name="Baron L."/>
            <person name="Becker A."/>
            <person name="Biteau N."/>
            <person name="Bloecker H."/>
            <person name="Blugeon C."/>
            <person name="Boskovic J."/>
            <person name="Brandt P."/>
            <person name="Brueckner M."/>
            <person name="Buitrago M.J."/>
            <person name="Coster F."/>
            <person name="Delaveau T."/>
            <person name="del Rey F."/>
            <person name="Dujon B."/>
            <person name="Eide L.G."/>
            <person name="Garcia-Cantalejo J.M."/>
            <person name="Goffeau A."/>
            <person name="Gomez-Peris A."/>
            <person name="Granotier C."/>
            <person name="Hanemann V."/>
            <person name="Hankeln T."/>
            <person name="Hoheisel J.D."/>
            <person name="Jaeger W."/>
            <person name="Jimenez A."/>
            <person name="Jonniaux J.-L."/>
            <person name="Kraemer C."/>
            <person name="Kuester H."/>
            <person name="Laamanen P."/>
            <person name="Legros Y."/>
            <person name="Louis E.J."/>
            <person name="Moeller-Rieker S."/>
            <person name="Monnet A."/>
            <person name="Moro M."/>
            <person name="Mueller-Auer S."/>
            <person name="Nussbaumer B."/>
            <person name="Paricio N."/>
            <person name="Paulin L."/>
            <person name="Perea J."/>
            <person name="Perez-Alonso M."/>
            <person name="Perez-Ortin J.E."/>
            <person name="Pohl T.M."/>
            <person name="Prydz H."/>
            <person name="Purnelle B."/>
            <person name="Rasmussen S.W."/>
            <person name="Remacha M.A."/>
            <person name="Revuelta J.L."/>
            <person name="Rieger M."/>
            <person name="Salom D."/>
            <person name="Saluz H.P."/>
            <person name="Saiz J.E."/>
            <person name="Saren A.-M."/>
            <person name="Schaefer M."/>
            <person name="Scharfe M."/>
            <person name="Schmidt E.R."/>
            <person name="Schneider C."/>
            <person name="Scholler P."/>
            <person name="Schwarz S."/>
            <person name="Soler-Mira A."/>
            <person name="Urrestarazu L.A."/>
            <person name="Verhasselt P."/>
            <person name="Vissers S."/>
            <person name="Voet M."/>
            <person name="Volckaert G."/>
            <person name="Wagner G."/>
            <person name="Wambutt R."/>
            <person name="Wedler E."/>
            <person name="Wedler H."/>
            <person name="Woelfl S."/>
            <person name="Harris D.E."/>
            <person name="Bowman S."/>
            <person name="Brown D."/>
            <person name="Churcher C.M."/>
            <person name="Connor R."/>
            <person name="Dedman K."/>
            <person name="Gentles S."/>
            <person name="Hamlin N."/>
            <person name="Hunt S."/>
            <person name="Jones L."/>
            <person name="McDonald S."/>
            <person name="Murphy L.D."/>
            <person name="Niblett D."/>
            <person name="Odell C."/>
            <person name="Oliver K."/>
            <person name="Rajandream M.A."/>
            <person name="Richards C."/>
            <person name="Shore L."/>
            <person name="Walsh S.V."/>
            <person name="Barrell B.G."/>
            <person name="Dietrich F.S."/>
            <person name="Mulligan J.T."/>
            <person name="Allen E."/>
            <person name="Araujo R."/>
            <person name="Aviles E."/>
            <person name="Berno A."/>
            <person name="Carpenter J."/>
            <person name="Chen E."/>
            <person name="Cherry J.M."/>
            <person name="Chung E."/>
            <person name="Duncan M."/>
            <person name="Hunicke-Smith S."/>
            <person name="Hyman R.W."/>
            <person name="Komp C."/>
            <person name="Lashkari D."/>
            <person name="Lew H."/>
            <person name="Lin D."/>
            <person name="Mosedale D."/>
            <person name="Nakahara K."/>
            <person name="Namath A."/>
            <person name="Oefner P."/>
            <person name="Oh C."/>
            <person name="Petel F.X."/>
            <person name="Roberts D."/>
            <person name="Schramm S."/>
            <person name="Schroeder M."/>
            <person name="Shogren T."/>
            <person name="Shroff N."/>
            <person name="Winant A."/>
            <person name="Yelton M.A."/>
            <person name="Botstein D."/>
            <person name="Davis R.W."/>
            <person name="Johnston M."/>
            <person name="Andrews S."/>
            <person name="Brinkman R."/>
            <person name="Cooper J."/>
            <person name="Ding H."/>
            <person name="Du Z."/>
            <person name="Favello A."/>
            <person name="Fulton L."/>
            <person name="Gattung S."/>
            <person name="Greco T."/>
            <person name="Hallsworth K."/>
            <person name="Hawkins J."/>
            <person name="Hillier L.W."/>
            <person name="Jier M."/>
            <person name="Johnson D."/>
            <person name="Johnston L."/>
            <person name="Kirsten J."/>
            <person name="Kucaba T."/>
            <person name="Langston Y."/>
            <person name="Latreille P."/>
            <person name="Le T."/>
            <person name="Mardis E."/>
            <person name="Menezes S."/>
            <person name="Miller N."/>
            <person name="Nhan M."/>
            <person name="Pauley A."/>
            <person name="Peluso D."/>
            <person name="Rifkin L."/>
            <person name="Riles L."/>
            <person name="Taich A."/>
            <person name="Trevaskis E."/>
            <person name="Vignati D."/>
            <person name="Wilcox L."/>
            <person name="Wohldman P."/>
            <person name="Vaudin M."/>
            <person name="Wilson R."/>
            <person name="Waterston R."/>
            <person name="Albermann K."/>
            <person name="Hani J."/>
            <person name="Heumann K."/>
            <person name="Kleine K."/>
            <person name="Mewes H.-W."/>
            <person name="Zollner A."/>
            <person name="Zaccaria P."/>
        </authorList>
    </citation>
    <scope>NUCLEOTIDE SEQUENCE [LARGE SCALE GENOMIC DNA]</scope>
    <source>
        <strain>ATCC 204508 / S288c</strain>
    </source>
</reference>
<reference key="2">
    <citation type="journal article" date="2014" name="G3 (Bethesda)">
        <title>The reference genome sequence of Saccharomyces cerevisiae: Then and now.</title>
        <authorList>
            <person name="Engel S.R."/>
            <person name="Dietrich F.S."/>
            <person name="Fisk D.G."/>
            <person name="Binkley G."/>
            <person name="Balakrishnan R."/>
            <person name="Costanzo M.C."/>
            <person name="Dwight S.S."/>
            <person name="Hitz B.C."/>
            <person name="Karra K."/>
            <person name="Nash R.S."/>
            <person name="Weng S."/>
            <person name="Wong E.D."/>
            <person name="Lloyd P."/>
            <person name="Skrzypek M.S."/>
            <person name="Miyasato S.R."/>
            <person name="Simison M."/>
            <person name="Cherry J.M."/>
        </authorList>
    </citation>
    <scope>GENOME REANNOTATION</scope>
    <source>
        <strain>ATCC 204508 / S288c</strain>
    </source>
</reference>